<gene>
    <name evidence="1" type="primary">gcvT</name>
    <name type="ordered locus">TK2035</name>
</gene>
<accession>Q5JDG3</accession>
<dbReference type="EC" id="2.1.2.10" evidence="1"/>
<dbReference type="EMBL" id="AP006878">
    <property type="protein sequence ID" value="BAD86224.1"/>
    <property type="molecule type" value="Genomic_DNA"/>
</dbReference>
<dbReference type="RefSeq" id="WP_011250985.1">
    <property type="nucleotide sequence ID" value="NC_006624.1"/>
</dbReference>
<dbReference type="SMR" id="Q5JDG3"/>
<dbReference type="STRING" id="69014.TK2035"/>
<dbReference type="EnsemblBacteria" id="BAD86224">
    <property type="protein sequence ID" value="BAD86224"/>
    <property type="gene ID" value="TK2035"/>
</dbReference>
<dbReference type="GeneID" id="78448570"/>
<dbReference type="KEGG" id="tko:TK2035"/>
<dbReference type="PATRIC" id="fig|69014.16.peg.1989"/>
<dbReference type="eggNOG" id="arCOG00756">
    <property type="taxonomic scope" value="Archaea"/>
</dbReference>
<dbReference type="HOGENOM" id="CLU_007884_10_2_2"/>
<dbReference type="InParanoid" id="Q5JDG3"/>
<dbReference type="OrthoDB" id="2001at2157"/>
<dbReference type="PhylomeDB" id="Q5JDG3"/>
<dbReference type="Proteomes" id="UP000000536">
    <property type="component" value="Chromosome"/>
</dbReference>
<dbReference type="GO" id="GO:0005960">
    <property type="term" value="C:glycine cleavage complex"/>
    <property type="evidence" value="ECO:0007669"/>
    <property type="project" value="InterPro"/>
</dbReference>
<dbReference type="GO" id="GO:0004047">
    <property type="term" value="F:aminomethyltransferase activity"/>
    <property type="evidence" value="ECO:0007669"/>
    <property type="project" value="UniProtKB-UniRule"/>
</dbReference>
<dbReference type="GO" id="GO:0008483">
    <property type="term" value="F:transaminase activity"/>
    <property type="evidence" value="ECO:0007669"/>
    <property type="project" value="UniProtKB-KW"/>
</dbReference>
<dbReference type="GO" id="GO:0019464">
    <property type="term" value="P:glycine decarboxylation via glycine cleavage system"/>
    <property type="evidence" value="ECO:0007669"/>
    <property type="project" value="UniProtKB-UniRule"/>
</dbReference>
<dbReference type="FunFam" id="2.40.30.110:FF:000003">
    <property type="entry name" value="Aminomethyltransferase"/>
    <property type="match status" value="1"/>
</dbReference>
<dbReference type="Gene3D" id="2.40.30.110">
    <property type="entry name" value="Aminomethyltransferase beta-barrel domains"/>
    <property type="match status" value="1"/>
</dbReference>
<dbReference type="Gene3D" id="3.30.70.1400">
    <property type="entry name" value="Aminomethyltransferase beta-barrel domains"/>
    <property type="match status" value="1"/>
</dbReference>
<dbReference type="Gene3D" id="4.10.1250.10">
    <property type="entry name" value="Aminomethyltransferase fragment"/>
    <property type="match status" value="1"/>
</dbReference>
<dbReference type="Gene3D" id="3.30.1360.120">
    <property type="entry name" value="Probable tRNA modification gtpase trme, domain 1"/>
    <property type="match status" value="1"/>
</dbReference>
<dbReference type="HAMAP" id="MF_00259">
    <property type="entry name" value="GcvT"/>
    <property type="match status" value="1"/>
</dbReference>
<dbReference type="InterPro" id="IPR006223">
    <property type="entry name" value="GCS_T"/>
</dbReference>
<dbReference type="InterPro" id="IPR022903">
    <property type="entry name" value="GCS_T_bac"/>
</dbReference>
<dbReference type="InterPro" id="IPR013977">
    <property type="entry name" value="GCST_C"/>
</dbReference>
<dbReference type="InterPro" id="IPR006222">
    <property type="entry name" value="GCV_T_N"/>
</dbReference>
<dbReference type="InterPro" id="IPR028896">
    <property type="entry name" value="GcvT/YgfZ/DmdA"/>
</dbReference>
<dbReference type="InterPro" id="IPR029043">
    <property type="entry name" value="GcvT/YgfZ_C"/>
</dbReference>
<dbReference type="InterPro" id="IPR027266">
    <property type="entry name" value="TrmE/GcvT_dom1"/>
</dbReference>
<dbReference type="NCBIfam" id="TIGR00528">
    <property type="entry name" value="gcvT"/>
    <property type="match status" value="1"/>
</dbReference>
<dbReference type="NCBIfam" id="NF001567">
    <property type="entry name" value="PRK00389.1"/>
    <property type="match status" value="1"/>
</dbReference>
<dbReference type="PANTHER" id="PTHR43757">
    <property type="entry name" value="AMINOMETHYLTRANSFERASE"/>
    <property type="match status" value="1"/>
</dbReference>
<dbReference type="PANTHER" id="PTHR43757:SF2">
    <property type="entry name" value="AMINOMETHYLTRANSFERASE, MITOCHONDRIAL"/>
    <property type="match status" value="1"/>
</dbReference>
<dbReference type="Pfam" id="PF01571">
    <property type="entry name" value="GCV_T"/>
    <property type="match status" value="1"/>
</dbReference>
<dbReference type="Pfam" id="PF08669">
    <property type="entry name" value="GCV_T_C"/>
    <property type="match status" value="1"/>
</dbReference>
<dbReference type="PIRSF" id="PIRSF006487">
    <property type="entry name" value="GcvT"/>
    <property type="match status" value="1"/>
</dbReference>
<dbReference type="SUPFAM" id="SSF101790">
    <property type="entry name" value="Aminomethyltransferase beta-barrel domain"/>
    <property type="match status" value="1"/>
</dbReference>
<dbReference type="SUPFAM" id="SSF103025">
    <property type="entry name" value="Folate-binding domain"/>
    <property type="match status" value="1"/>
</dbReference>
<organism>
    <name type="scientific">Thermococcus kodakarensis (strain ATCC BAA-918 / JCM 12380 / KOD1)</name>
    <name type="common">Pyrococcus kodakaraensis (strain KOD1)</name>
    <dbReference type="NCBI Taxonomy" id="69014"/>
    <lineage>
        <taxon>Archaea</taxon>
        <taxon>Methanobacteriati</taxon>
        <taxon>Methanobacteriota</taxon>
        <taxon>Thermococci</taxon>
        <taxon>Thermococcales</taxon>
        <taxon>Thermococcaceae</taxon>
        <taxon>Thermococcus</taxon>
    </lineage>
</organism>
<protein>
    <recommendedName>
        <fullName evidence="1">Probable aminomethyltransferase</fullName>
        <ecNumber evidence="1">2.1.2.10</ecNumber>
    </recommendedName>
    <alternativeName>
        <fullName evidence="1">Glycine cleavage system T protein</fullName>
    </alternativeName>
</protein>
<keyword id="KW-0032">Aminotransferase</keyword>
<keyword id="KW-1185">Reference proteome</keyword>
<keyword id="KW-0808">Transferase</keyword>
<sequence>MVKRVHIFDWHKEHAKKVEEFAGWEMPIWYSSIKEEHLAVRNGVGIFDVSHMGEFIFRGKDALEFLQYVTTNDISKPPAISGTYTLVLNERGAVKDETLVFNMGNDTYMMVCDSDAFEKLDAWFNAIKRGIEKFGDIDLEIENKTYDMAMFSIQGPKARDLAKELFGIDINDLWWFQAKEVELDGIKMLLSRSGYTGENGFEVYFEDANPYHPDPSKRGEPEKALHVWKTILEAGEKYGIKPAGLGARDTLRLEAGYTLYGNETKEKQLLSTDIDEVTPLQANLDFAIFWDKEFIGKEALLKQKERGLPSKMVHFKMVDKGVPREGYKVYKDGELIGEVTSGTLSPLLGIGIGIAFVKPEYAVPGVEIEVEIRGKPKKAVTVAPPFYDPKKYGAFREE</sequence>
<comment type="function">
    <text evidence="1">The glycine cleavage system catalyzes the degradation of glycine.</text>
</comment>
<comment type="catalytic activity">
    <reaction evidence="1">
        <text>N(6)-[(R)-S(8)-aminomethyldihydrolipoyl]-L-lysyl-[protein] + (6S)-5,6,7,8-tetrahydrofolate = N(6)-[(R)-dihydrolipoyl]-L-lysyl-[protein] + (6R)-5,10-methylene-5,6,7,8-tetrahydrofolate + NH4(+)</text>
        <dbReference type="Rhea" id="RHEA:16945"/>
        <dbReference type="Rhea" id="RHEA-COMP:10475"/>
        <dbReference type="Rhea" id="RHEA-COMP:10492"/>
        <dbReference type="ChEBI" id="CHEBI:15636"/>
        <dbReference type="ChEBI" id="CHEBI:28938"/>
        <dbReference type="ChEBI" id="CHEBI:57453"/>
        <dbReference type="ChEBI" id="CHEBI:83100"/>
        <dbReference type="ChEBI" id="CHEBI:83143"/>
        <dbReference type="EC" id="2.1.2.10"/>
    </reaction>
</comment>
<comment type="subunit">
    <text evidence="1">The glycine cleavage system is composed of four proteins: P, T, L and H.</text>
</comment>
<comment type="similarity">
    <text evidence="1">Belongs to the GcvT family.</text>
</comment>
<proteinExistence type="inferred from homology"/>
<reference key="1">
    <citation type="journal article" date="2005" name="Genome Res.">
        <title>Complete genome sequence of the hyperthermophilic archaeon Thermococcus kodakaraensis KOD1 and comparison with Pyrococcus genomes.</title>
        <authorList>
            <person name="Fukui T."/>
            <person name="Atomi H."/>
            <person name="Kanai T."/>
            <person name="Matsumi R."/>
            <person name="Fujiwara S."/>
            <person name="Imanaka T."/>
        </authorList>
    </citation>
    <scope>NUCLEOTIDE SEQUENCE [LARGE SCALE GENOMIC DNA]</scope>
    <source>
        <strain>ATCC BAA-918 / JCM 12380 / KOD1</strain>
    </source>
</reference>
<feature type="chain" id="PRO_0000122626" description="Probable aminomethyltransferase">
    <location>
        <begin position="1"/>
        <end position="398"/>
    </location>
</feature>
<name>GCST_THEKO</name>
<evidence type="ECO:0000255" key="1">
    <source>
        <dbReference type="HAMAP-Rule" id="MF_00259"/>
    </source>
</evidence>